<sequence>MSRYRGPRVKIIRRLGALPGLTNKTPQLKSNLINQSTSNKKISQYRIRLEEKQKLRFHYGITERQLLNYVRIARKAKGSTGEVLLQLLEMRLDNVIFRLGMTPTIPGARQLVNHRHILVNDYIVDIPSYRCKPQDFITIKNQRKSESIINKNINFYQKYKIPNHLTYNSLEKKGLVNQILDRESIGLKVNELLVVEYYSRQA</sequence>
<protein>
    <recommendedName>
        <fullName evidence="2">Small ribosomal subunit protein uS4c</fullName>
    </recommendedName>
    <alternativeName>
        <fullName>30S ribosomal protein S4, chloroplastic</fullName>
    </alternativeName>
</protein>
<accession>P59144</accession>
<evidence type="ECO:0000250" key="1"/>
<evidence type="ECO:0000305" key="2"/>
<feature type="chain" id="PRO_0000132608" description="Small ribosomal subunit protein uS4c">
    <location>
        <begin position="1"/>
        <end position="202"/>
    </location>
</feature>
<feature type="domain" description="S4 RNA-binding">
    <location>
        <begin position="90"/>
        <end position="152"/>
    </location>
</feature>
<gene>
    <name type="primary">rps4</name>
</gene>
<name>RR4_DENFL</name>
<keyword id="KW-0150">Chloroplast</keyword>
<keyword id="KW-0934">Plastid</keyword>
<keyword id="KW-0687">Ribonucleoprotein</keyword>
<keyword id="KW-0689">Ribosomal protein</keyword>
<keyword id="KW-0694">RNA-binding</keyword>
<keyword id="KW-0699">rRNA-binding</keyword>
<organism>
    <name type="scientific">Dendrohypopterygium filiculiforme</name>
    <name type="common">Moss</name>
    <name type="synonym">Leskea filiculaeformis</name>
    <dbReference type="NCBI Taxonomy" id="98741"/>
    <lineage>
        <taxon>Eukaryota</taxon>
        <taxon>Viridiplantae</taxon>
        <taxon>Streptophyta</taxon>
        <taxon>Embryophyta</taxon>
        <taxon>Bryophyta</taxon>
        <taxon>Bryophytina</taxon>
        <taxon>Bryopsida</taxon>
        <taxon>Bryidae</taxon>
        <taxon>Hypnanae</taxon>
        <taxon>Hookeriales</taxon>
        <taxon>Hypopterygiaceae</taxon>
        <taxon>Dendrohypopterygium</taxon>
    </lineage>
</organism>
<reference key="1">
    <citation type="journal article" date="2002" name="Cryptogam. Bryol.">
        <title>The systematic position of the Hypoptergiaceae (Bryopsida) inferred from rps4 gene sequences.</title>
        <authorList>
            <person name="Bloecher R."/>
            <person name="Capesius I."/>
        </authorList>
    </citation>
    <scope>NUCLEOTIDE SEQUENCE [GENOMIC DNA]</scope>
    <source>
        <tissue>Gametophyte</tissue>
    </source>
</reference>
<comment type="function">
    <text evidence="1">One of the primary rRNA binding proteins, it binds directly to 16S rRNA where it nucleates assembly of the body of the 30S subunit.</text>
</comment>
<comment type="function">
    <text evidence="1">With S5 and S12 plays an important role in translational accuracy.</text>
</comment>
<comment type="subunit">
    <text evidence="1">Part of the 30S ribosomal subunit. Contacts protein S5. The interaction surface between S4 and S5 is involved in control of translational fidelity (By similarity).</text>
</comment>
<comment type="subcellular location">
    <subcellularLocation>
        <location>Plastid</location>
        <location>Chloroplast</location>
    </subcellularLocation>
</comment>
<comment type="similarity">
    <text evidence="2">Belongs to the universal ribosomal protein uS4 family.</text>
</comment>
<proteinExistence type="inferred from homology"/>
<geneLocation type="chloroplast"/>
<dbReference type="EMBL" id="AJ252290">
    <property type="protein sequence ID" value="CAC81023.1"/>
    <property type="molecule type" value="Genomic_DNA"/>
</dbReference>
<dbReference type="SMR" id="P59144"/>
<dbReference type="GO" id="GO:0009507">
    <property type="term" value="C:chloroplast"/>
    <property type="evidence" value="ECO:0007669"/>
    <property type="project" value="UniProtKB-SubCell"/>
</dbReference>
<dbReference type="GO" id="GO:0015935">
    <property type="term" value="C:small ribosomal subunit"/>
    <property type="evidence" value="ECO:0007669"/>
    <property type="project" value="InterPro"/>
</dbReference>
<dbReference type="GO" id="GO:0019843">
    <property type="term" value="F:rRNA binding"/>
    <property type="evidence" value="ECO:0007669"/>
    <property type="project" value="UniProtKB-UniRule"/>
</dbReference>
<dbReference type="GO" id="GO:0003735">
    <property type="term" value="F:structural constituent of ribosome"/>
    <property type="evidence" value="ECO:0007669"/>
    <property type="project" value="InterPro"/>
</dbReference>
<dbReference type="GO" id="GO:0042274">
    <property type="term" value="P:ribosomal small subunit biogenesis"/>
    <property type="evidence" value="ECO:0007669"/>
    <property type="project" value="TreeGrafter"/>
</dbReference>
<dbReference type="GO" id="GO:0006412">
    <property type="term" value="P:translation"/>
    <property type="evidence" value="ECO:0007669"/>
    <property type="project" value="UniProtKB-UniRule"/>
</dbReference>
<dbReference type="CDD" id="cd00165">
    <property type="entry name" value="S4"/>
    <property type="match status" value="1"/>
</dbReference>
<dbReference type="FunFam" id="1.10.1050.10:FF:000002">
    <property type="entry name" value="30S ribosomal protein S4, chloroplastic"/>
    <property type="match status" value="1"/>
</dbReference>
<dbReference type="FunFam" id="3.10.290.10:FF:000081">
    <property type="entry name" value="30S ribosomal protein S4, chloroplastic"/>
    <property type="match status" value="1"/>
</dbReference>
<dbReference type="Gene3D" id="1.10.1050.10">
    <property type="entry name" value="Ribosomal Protein S4 Delta 41, Chain A, domain 1"/>
    <property type="match status" value="1"/>
</dbReference>
<dbReference type="Gene3D" id="3.10.290.10">
    <property type="entry name" value="RNA-binding S4 domain"/>
    <property type="match status" value="1"/>
</dbReference>
<dbReference type="HAMAP" id="MF_01306_B">
    <property type="entry name" value="Ribosomal_uS4_B"/>
    <property type="match status" value="1"/>
</dbReference>
<dbReference type="InterPro" id="IPR022801">
    <property type="entry name" value="Ribosomal_uS4"/>
</dbReference>
<dbReference type="InterPro" id="IPR005709">
    <property type="entry name" value="Ribosomal_uS4_bac-type"/>
</dbReference>
<dbReference type="InterPro" id="IPR018079">
    <property type="entry name" value="Ribosomal_uS4_CS"/>
</dbReference>
<dbReference type="InterPro" id="IPR001912">
    <property type="entry name" value="Ribosomal_uS4_N"/>
</dbReference>
<dbReference type="InterPro" id="IPR002942">
    <property type="entry name" value="S4_RNA-bd"/>
</dbReference>
<dbReference type="InterPro" id="IPR036986">
    <property type="entry name" value="S4_RNA-bd_sf"/>
</dbReference>
<dbReference type="NCBIfam" id="NF003717">
    <property type="entry name" value="PRK05327.1"/>
    <property type="match status" value="1"/>
</dbReference>
<dbReference type="NCBIfam" id="TIGR01017">
    <property type="entry name" value="rpsD_bact"/>
    <property type="match status" value="1"/>
</dbReference>
<dbReference type="PANTHER" id="PTHR11831">
    <property type="entry name" value="30S 40S RIBOSOMAL PROTEIN"/>
    <property type="match status" value="1"/>
</dbReference>
<dbReference type="PANTHER" id="PTHR11831:SF4">
    <property type="entry name" value="SMALL RIBOSOMAL SUBUNIT PROTEIN US4M"/>
    <property type="match status" value="1"/>
</dbReference>
<dbReference type="Pfam" id="PF00163">
    <property type="entry name" value="Ribosomal_S4"/>
    <property type="match status" value="1"/>
</dbReference>
<dbReference type="Pfam" id="PF01479">
    <property type="entry name" value="S4"/>
    <property type="match status" value="1"/>
</dbReference>
<dbReference type="SMART" id="SM01390">
    <property type="entry name" value="Ribosomal_S4"/>
    <property type="match status" value="1"/>
</dbReference>
<dbReference type="SMART" id="SM00363">
    <property type="entry name" value="S4"/>
    <property type="match status" value="1"/>
</dbReference>
<dbReference type="SUPFAM" id="SSF55174">
    <property type="entry name" value="Alpha-L RNA-binding motif"/>
    <property type="match status" value="1"/>
</dbReference>
<dbReference type="PROSITE" id="PS00632">
    <property type="entry name" value="RIBOSOMAL_S4"/>
    <property type="match status" value="1"/>
</dbReference>
<dbReference type="PROSITE" id="PS50889">
    <property type="entry name" value="S4"/>
    <property type="match status" value="1"/>
</dbReference>